<feature type="transit peptide" description="Chloroplast" evidence="2">
    <location>
        <begin position="1"/>
        <end position="50"/>
    </location>
</feature>
<feature type="chain" id="PRO_0000015630" description="Ketol-acid reductoisomerase, chloroplastic">
    <location>
        <begin position="51"/>
        <end position="581"/>
    </location>
</feature>
<feature type="domain" description="KARI N-terminal Rossmann" evidence="3">
    <location>
        <begin position="92"/>
        <end position="290"/>
    </location>
</feature>
<feature type="domain" description="KARI C-terminal knotted 1" evidence="4">
    <location>
        <begin position="291"/>
        <end position="439"/>
    </location>
</feature>
<feature type="domain" description="KARI C-terminal knotted 2" evidence="4">
    <location>
        <begin position="440"/>
        <end position="576"/>
    </location>
</feature>
<feature type="active site" evidence="2">
    <location>
        <position position="210"/>
    </location>
</feature>
<feature type="binding site" evidence="1">
    <location>
        <begin position="113"/>
        <end position="120"/>
    </location>
    <ligand>
        <name>NADP(+)</name>
        <dbReference type="ChEBI" id="CHEBI:58349"/>
    </ligand>
</feature>
<feature type="binding site" evidence="1">
    <location>
        <begin position="146"/>
        <end position="151"/>
    </location>
    <ligand>
        <name>NADP(+)</name>
        <dbReference type="ChEBI" id="CHEBI:58349"/>
    </ligand>
</feature>
<feature type="binding site" evidence="1">
    <location>
        <begin position="185"/>
        <end position="189"/>
    </location>
    <ligand>
        <name>NADP(+)</name>
        <dbReference type="ChEBI" id="CHEBI:58349"/>
    </ligand>
</feature>
<feature type="binding site" evidence="4">
    <location>
        <position position="299"/>
    </location>
    <ligand>
        <name>Mg(2+)</name>
        <dbReference type="ChEBI" id="CHEBI:18420"/>
        <label>1</label>
    </ligand>
</feature>
<feature type="binding site" evidence="4">
    <location>
        <position position="299"/>
    </location>
    <ligand>
        <name>Mg(2+)</name>
        <dbReference type="ChEBI" id="CHEBI:18420"/>
        <label>2</label>
    </ligand>
</feature>
<feature type="binding site" evidence="4">
    <location>
        <position position="303"/>
    </location>
    <ligand>
        <name>Mg(2+)</name>
        <dbReference type="ChEBI" id="CHEBI:18420"/>
        <label>1</label>
    </ligand>
</feature>
<feature type="binding site" evidence="4">
    <location>
        <position position="476"/>
    </location>
    <ligand>
        <name>Mg(2+)</name>
        <dbReference type="ChEBI" id="CHEBI:18420"/>
        <label>2</label>
    </ligand>
</feature>
<feature type="binding site" evidence="4">
    <location>
        <position position="480"/>
    </location>
    <ligand>
        <name>Mg(2+)</name>
        <dbReference type="ChEBI" id="CHEBI:18420"/>
        <label>2</label>
    </ligand>
</feature>
<feature type="binding site" evidence="4">
    <location>
        <position position="502"/>
    </location>
    <ligand>
        <name>substrate</name>
    </ligand>
</feature>
<evidence type="ECO:0000250" key="1"/>
<evidence type="ECO:0000255" key="2"/>
<evidence type="ECO:0000255" key="3">
    <source>
        <dbReference type="PROSITE-ProRule" id="PRU01197"/>
    </source>
</evidence>
<evidence type="ECO:0000255" key="4">
    <source>
        <dbReference type="PROSITE-ProRule" id="PRU01198"/>
    </source>
</evidence>
<evidence type="ECO:0000305" key="5"/>
<sequence length="581" mass="62852">MAAVTSSCSTAISASSKTLAKPVAASFAPTNLSFSKLSPQSIRARRSITVGSALGATKVSAPPATHPVSLDFETSVFKKERVNLAGHEEYIVRGGRDLFHLLPDAFKGIKQIGVIGWGSQGPAQAQNLRDSLVEAKSDIVVKVGLRKGSSSFNEAREAGFSEEKGTLGDIWETISGSDLVLLLISDSAQADNYEKIFSHLKPNSILGLSHGFLLGHLQSIGLDFPKNFSVIAVCPKGMGPSVRRLYVQGKEINGAGINSSFGVHQDVDGRATNVALGWSVALGSPFTFATTLEQEYKSDIFGERGILLGAVHGIVESLFRRYTENGMSEDLAYKNTVESITGVISKTISTQGMLAVYNALSEDGKKEFEKAYSASFYPCMEILYECYEDVASGSEIRSVVLAGRRFYEKEGLPAFPMGKIDQTRMWKVGERVRSTRPAGDLGPLYPFTAGVFVAMMMAQIEVLRKKGHSYSEIINESVIESVDSLNPFMHARGVSFMVDNCSTTARLGSRKWAPRFDYILTQQALVAVDSGAPINQDLISNFVSDPVHGAIQVCAELRPTLDISVPAAADFVRPELRQCSN</sequence>
<protein>
    <recommendedName>
        <fullName>Ketol-acid reductoisomerase, chloroplastic</fullName>
        <ecNumber>1.1.1.86</ecNumber>
    </recommendedName>
    <alternativeName>
        <fullName>Acetohydroxy-acid reductoisomerase</fullName>
    </alternativeName>
    <alternativeName>
        <fullName>Alpha-keto-beta-hydroxylacyl reductoisomerase</fullName>
    </alternativeName>
</protein>
<keyword id="KW-0028">Amino-acid biosynthesis</keyword>
<keyword id="KW-0100">Branched-chain amino acid biosynthesis</keyword>
<keyword id="KW-0150">Chloroplast</keyword>
<keyword id="KW-0460">Magnesium</keyword>
<keyword id="KW-0479">Metal-binding</keyword>
<keyword id="KW-0521">NADP</keyword>
<keyword id="KW-0560">Oxidoreductase</keyword>
<keyword id="KW-0934">Plastid</keyword>
<keyword id="KW-0809">Transit peptide</keyword>
<name>ILV5_PEA</name>
<gene>
    <name type="primary">PGAAIR</name>
</gene>
<proteinExistence type="evidence at transcript level"/>
<reference key="1">
    <citation type="submission" date="1998-08" db="EMBL/GenBank/DDBJ databases">
        <authorList>
            <person name="Gu X."/>
            <person name="Xu Y."/>
            <person name="Wu J."/>
            <person name="Hou X."/>
            <person name="Chen Z."/>
            <person name="Zhu Y."/>
        </authorList>
    </citation>
    <scope>NUCLEOTIDE SEQUENCE [MRNA]</scope>
    <source>
        <strain>cv. G2</strain>
    </source>
</reference>
<comment type="catalytic activity">
    <reaction>
        <text>(2R)-2,3-dihydroxy-3-methylbutanoate + NADP(+) = (2S)-2-acetolactate + NADPH + H(+)</text>
        <dbReference type="Rhea" id="RHEA:22068"/>
        <dbReference type="ChEBI" id="CHEBI:15378"/>
        <dbReference type="ChEBI" id="CHEBI:49072"/>
        <dbReference type="ChEBI" id="CHEBI:57783"/>
        <dbReference type="ChEBI" id="CHEBI:58349"/>
        <dbReference type="ChEBI" id="CHEBI:58476"/>
        <dbReference type="EC" id="1.1.1.86"/>
    </reaction>
</comment>
<comment type="catalytic activity">
    <reaction>
        <text>(2R,3R)-2,3-dihydroxy-3-methylpentanoate + NADP(+) = (S)-2-ethyl-2-hydroxy-3-oxobutanoate + NADPH + H(+)</text>
        <dbReference type="Rhea" id="RHEA:13493"/>
        <dbReference type="ChEBI" id="CHEBI:15378"/>
        <dbReference type="ChEBI" id="CHEBI:49256"/>
        <dbReference type="ChEBI" id="CHEBI:49258"/>
        <dbReference type="ChEBI" id="CHEBI:57783"/>
        <dbReference type="ChEBI" id="CHEBI:58349"/>
        <dbReference type="EC" id="1.1.1.86"/>
    </reaction>
</comment>
<comment type="cofactor">
    <cofactor evidence="1">
        <name>Mg(2+)</name>
        <dbReference type="ChEBI" id="CHEBI:18420"/>
    </cofactor>
    <text evidence="1">Binds 2 magnesium ions per subunit.</text>
</comment>
<comment type="pathway">
    <text>Amino-acid biosynthesis; L-isoleucine biosynthesis; L-isoleucine from 2-oxobutanoate: step 2/4.</text>
</comment>
<comment type="pathway">
    <text>Amino-acid biosynthesis; L-valine biosynthesis; L-valine from pyruvate: step 2/4.</text>
</comment>
<comment type="subunit">
    <text evidence="1">Homodimer.</text>
</comment>
<comment type="subcellular location">
    <subcellularLocation>
        <location evidence="5">Plastid</location>
        <location evidence="5">Chloroplast</location>
    </subcellularLocation>
</comment>
<comment type="similarity">
    <text evidence="5">Belongs to the ketol-acid reductoisomerase family.</text>
</comment>
<organism>
    <name type="scientific">Pisum sativum</name>
    <name type="common">Garden pea</name>
    <name type="synonym">Lathyrus oleraceus</name>
    <dbReference type="NCBI Taxonomy" id="3888"/>
    <lineage>
        <taxon>Eukaryota</taxon>
        <taxon>Viridiplantae</taxon>
        <taxon>Streptophyta</taxon>
        <taxon>Embryophyta</taxon>
        <taxon>Tracheophyta</taxon>
        <taxon>Spermatophyta</taxon>
        <taxon>Magnoliopsida</taxon>
        <taxon>eudicotyledons</taxon>
        <taxon>Gunneridae</taxon>
        <taxon>Pentapetalae</taxon>
        <taxon>rosids</taxon>
        <taxon>fabids</taxon>
        <taxon>Fabales</taxon>
        <taxon>Fabaceae</taxon>
        <taxon>Papilionoideae</taxon>
        <taxon>50 kb inversion clade</taxon>
        <taxon>NPAAA clade</taxon>
        <taxon>Hologalegina</taxon>
        <taxon>IRL clade</taxon>
        <taxon>Fabeae</taxon>
        <taxon>Pisum</taxon>
    </lineage>
</organism>
<dbReference type="EC" id="1.1.1.86"/>
<dbReference type="EMBL" id="Y17796">
    <property type="protein sequence ID" value="CAA76854.1"/>
    <property type="molecule type" value="mRNA"/>
</dbReference>
<dbReference type="PIR" id="T06825">
    <property type="entry name" value="T06825"/>
</dbReference>
<dbReference type="SMR" id="O82043"/>
<dbReference type="UniPathway" id="UPA00047">
    <property type="reaction ID" value="UER00056"/>
</dbReference>
<dbReference type="UniPathway" id="UPA00049">
    <property type="reaction ID" value="UER00060"/>
</dbReference>
<dbReference type="GO" id="GO:0009507">
    <property type="term" value="C:chloroplast"/>
    <property type="evidence" value="ECO:0007669"/>
    <property type="project" value="UniProtKB-SubCell"/>
</dbReference>
<dbReference type="GO" id="GO:0005739">
    <property type="term" value="C:mitochondrion"/>
    <property type="evidence" value="ECO:0007669"/>
    <property type="project" value="TreeGrafter"/>
</dbReference>
<dbReference type="GO" id="GO:0004455">
    <property type="term" value="F:ketol-acid reductoisomerase activity"/>
    <property type="evidence" value="ECO:0007669"/>
    <property type="project" value="UniProtKB-EC"/>
</dbReference>
<dbReference type="GO" id="GO:0046872">
    <property type="term" value="F:metal ion binding"/>
    <property type="evidence" value="ECO:0007669"/>
    <property type="project" value="UniProtKB-KW"/>
</dbReference>
<dbReference type="GO" id="GO:0009097">
    <property type="term" value="P:isoleucine biosynthetic process"/>
    <property type="evidence" value="ECO:0007669"/>
    <property type="project" value="UniProtKB-UniPathway"/>
</dbReference>
<dbReference type="GO" id="GO:0009099">
    <property type="term" value="P:L-valine biosynthetic process"/>
    <property type="evidence" value="ECO:0007669"/>
    <property type="project" value="UniProtKB-UniPathway"/>
</dbReference>
<dbReference type="FunFam" id="1.10.1040.10:FF:000015">
    <property type="entry name" value="Ketol-acid reductoisomerase"/>
    <property type="match status" value="1"/>
</dbReference>
<dbReference type="FunFam" id="3.40.50.720:FF:000146">
    <property type="entry name" value="Ketol-acid reductoisomerase"/>
    <property type="match status" value="1"/>
</dbReference>
<dbReference type="Gene3D" id="1.10.1040.10">
    <property type="entry name" value="N-(1-d-carboxylethyl)-l-norvaline Dehydrogenase, domain 2"/>
    <property type="match status" value="1"/>
</dbReference>
<dbReference type="Gene3D" id="3.40.50.720">
    <property type="entry name" value="NAD(P)-binding Rossmann-like Domain"/>
    <property type="match status" value="1"/>
</dbReference>
<dbReference type="InterPro" id="IPR008927">
    <property type="entry name" value="6-PGluconate_DH-like_C_sf"/>
</dbReference>
<dbReference type="InterPro" id="IPR013328">
    <property type="entry name" value="6PGD_dom2"/>
</dbReference>
<dbReference type="InterPro" id="IPR013023">
    <property type="entry name" value="KARI"/>
</dbReference>
<dbReference type="InterPro" id="IPR000506">
    <property type="entry name" value="KARI_C"/>
</dbReference>
<dbReference type="InterPro" id="IPR013116">
    <property type="entry name" value="KARI_N"/>
</dbReference>
<dbReference type="InterPro" id="IPR016206">
    <property type="entry name" value="KetolA_reductoisomerase_plant"/>
</dbReference>
<dbReference type="InterPro" id="IPR036291">
    <property type="entry name" value="NAD(P)-bd_dom_sf"/>
</dbReference>
<dbReference type="PANTHER" id="PTHR21371">
    <property type="entry name" value="KETOL-ACID REDUCTOISOMERASE, MITOCHONDRIAL"/>
    <property type="match status" value="1"/>
</dbReference>
<dbReference type="PANTHER" id="PTHR21371:SF1">
    <property type="entry name" value="KETOL-ACID REDUCTOISOMERASE, MITOCHONDRIAL"/>
    <property type="match status" value="1"/>
</dbReference>
<dbReference type="Pfam" id="PF01450">
    <property type="entry name" value="KARI_C"/>
    <property type="match status" value="2"/>
</dbReference>
<dbReference type="Pfam" id="PF07991">
    <property type="entry name" value="KARI_N"/>
    <property type="match status" value="1"/>
</dbReference>
<dbReference type="PIRSF" id="PIRSF000118">
    <property type="entry name" value="Ilv5_plant"/>
    <property type="match status" value="1"/>
</dbReference>
<dbReference type="SUPFAM" id="SSF48179">
    <property type="entry name" value="6-phosphogluconate dehydrogenase C-terminal domain-like"/>
    <property type="match status" value="1"/>
</dbReference>
<dbReference type="SUPFAM" id="SSF51735">
    <property type="entry name" value="NAD(P)-binding Rossmann-fold domains"/>
    <property type="match status" value="1"/>
</dbReference>
<dbReference type="PROSITE" id="PS51851">
    <property type="entry name" value="KARI_C"/>
    <property type="match status" value="2"/>
</dbReference>
<dbReference type="PROSITE" id="PS51850">
    <property type="entry name" value="KARI_N"/>
    <property type="match status" value="1"/>
</dbReference>
<accession>O82043</accession>